<dbReference type="EC" id="1.13.11.27"/>
<dbReference type="EMBL" id="BX284603">
    <property type="protein sequence ID" value="CAA90315.1"/>
    <property type="molecule type" value="Genomic_DNA"/>
</dbReference>
<dbReference type="PIR" id="T25063">
    <property type="entry name" value="T25063"/>
</dbReference>
<dbReference type="RefSeq" id="NP_001369878.1">
    <property type="nucleotide sequence ID" value="NM_001382982.2"/>
</dbReference>
<dbReference type="RefSeq" id="NP_499324.1">
    <property type="nucleotide sequence ID" value="NM_066923.6"/>
</dbReference>
<dbReference type="SMR" id="Q22633"/>
<dbReference type="BioGRID" id="41664">
    <property type="interactions" value="13"/>
</dbReference>
<dbReference type="FunCoup" id="Q22633">
    <property type="interactions" value="73"/>
</dbReference>
<dbReference type="STRING" id="6239.T21C12.2.1"/>
<dbReference type="PaxDb" id="6239-T21C12.2"/>
<dbReference type="PeptideAtlas" id="Q22633"/>
<dbReference type="EnsemblMetazoa" id="T21C12.2.1">
    <property type="protein sequence ID" value="T21C12.2.1"/>
    <property type="gene ID" value="WBGene00001993"/>
</dbReference>
<dbReference type="GeneID" id="176473"/>
<dbReference type="UCSC" id="T21C12.2">
    <property type="organism name" value="c. elegans"/>
</dbReference>
<dbReference type="AGR" id="WB:WBGene00001993"/>
<dbReference type="WormBase" id="T21C12.2">
    <property type="protein sequence ID" value="CE02347"/>
    <property type="gene ID" value="WBGene00001993"/>
    <property type="gene designation" value="hpd-1"/>
</dbReference>
<dbReference type="eggNOG" id="KOG0638">
    <property type="taxonomic scope" value="Eukaryota"/>
</dbReference>
<dbReference type="GeneTree" id="ENSGT00530000063474"/>
<dbReference type="HOGENOM" id="CLU_034004_3_1_1"/>
<dbReference type="InParanoid" id="Q22633"/>
<dbReference type="OMA" id="DPFPVKG"/>
<dbReference type="OrthoDB" id="414569at2759"/>
<dbReference type="PhylomeDB" id="Q22633"/>
<dbReference type="Reactome" id="R-CEL-8963684">
    <property type="pathway name" value="Tyrosine catabolism"/>
</dbReference>
<dbReference type="UniPathway" id="UPA00139">
    <property type="reaction ID" value="UER00362"/>
</dbReference>
<dbReference type="PRO" id="PR:Q22633"/>
<dbReference type="Proteomes" id="UP000001940">
    <property type="component" value="Chromosome III"/>
</dbReference>
<dbReference type="Bgee" id="WBGene00001993">
    <property type="expression patterns" value="Expressed in larva and 4 other cell types or tissues"/>
</dbReference>
<dbReference type="GO" id="GO:0005789">
    <property type="term" value="C:endoplasmic reticulum membrane"/>
    <property type="evidence" value="ECO:0000318"/>
    <property type="project" value="GO_Central"/>
</dbReference>
<dbReference type="GO" id="GO:0000139">
    <property type="term" value="C:Golgi membrane"/>
    <property type="evidence" value="ECO:0000318"/>
    <property type="project" value="GO_Central"/>
</dbReference>
<dbReference type="GO" id="GO:0003868">
    <property type="term" value="F:4-hydroxyphenylpyruvate dioxygenase activity"/>
    <property type="evidence" value="ECO:0000250"/>
    <property type="project" value="UniProtKB"/>
</dbReference>
<dbReference type="GO" id="GO:0046872">
    <property type="term" value="F:metal ion binding"/>
    <property type="evidence" value="ECO:0007669"/>
    <property type="project" value="UniProtKB-KW"/>
</dbReference>
<dbReference type="GO" id="GO:0006559">
    <property type="term" value="P:L-phenylalanine catabolic process"/>
    <property type="evidence" value="ECO:0007669"/>
    <property type="project" value="UniProtKB-UniPathway"/>
</dbReference>
<dbReference type="GO" id="GO:0006572">
    <property type="term" value="P:tyrosine catabolic process"/>
    <property type="evidence" value="ECO:0000250"/>
    <property type="project" value="UniProtKB"/>
</dbReference>
<dbReference type="CDD" id="cd07250">
    <property type="entry name" value="HPPD_C_like"/>
    <property type="match status" value="1"/>
</dbReference>
<dbReference type="CDD" id="cd08342">
    <property type="entry name" value="HPPD_N_like"/>
    <property type="match status" value="1"/>
</dbReference>
<dbReference type="FunFam" id="3.10.180.10:FF:000001">
    <property type="entry name" value="4-hydroxyphenylpyruvate dioxygenase"/>
    <property type="match status" value="1"/>
</dbReference>
<dbReference type="FunFam" id="3.10.180.10:FF:000048">
    <property type="entry name" value="4-hydroxyphenylpyruvate dioxygenase"/>
    <property type="match status" value="1"/>
</dbReference>
<dbReference type="Gene3D" id="3.10.180.10">
    <property type="entry name" value="2,3-Dihydroxybiphenyl 1,2-Dioxygenase, domain 1"/>
    <property type="match status" value="2"/>
</dbReference>
<dbReference type="InterPro" id="IPR005956">
    <property type="entry name" value="4OHPhenylPyrv_dOase"/>
</dbReference>
<dbReference type="InterPro" id="IPR041735">
    <property type="entry name" value="4OHPhenylPyrv_dOase_C"/>
</dbReference>
<dbReference type="InterPro" id="IPR041736">
    <property type="entry name" value="4OHPhenylPyrv_dOase_N"/>
</dbReference>
<dbReference type="InterPro" id="IPR029068">
    <property type="entry name" value="Glyas_Bleomycin-R_OHBP_Dase"/>
</dbReference>
<dbReference type="InterPro" id="IPR004360">
    <property type="entry name" value="Glyas_Fos-R_dOase_dom"/>
</dbReference>
<dbReference type="InterPro" id="IPR037523">
    <property type="entry name" value="VOC"/>
</dbReference>
<dbReference type="NCBIfam" id="TIGR01263">
    <property type="entry name" value="4HPPD"/>
    <property type="match status" value="1"/>
</dbReference>
<dbReference type="PANTHER" id="PTHR11959">
    <property type="entry name" value="4-HYDROXYPHENYLPYRUVATE DIOXYGENASE"/>
    <property type="match status" value="1"/>
</dbReference>
<dbReference type="PANTHER" id="PTHR11959:SF1">
    <property type="entry name" value="4-HYDROXYPHENYLPYRUVATE DIOXYGENASE"/>
    <property type="match status" value="1"/>
</dbReference>
<dbReference type="Pfam" id="PF00903">
    <property type="entry name" value="Glyoxalase"/>
    <property type="match status" value="2"/>
</dbReference>
<dbReference type="PIRSF" id="PIRSF009283">
    <property type="entry name" value="HPP_dOase"/>
    <property type="match status" value="1"/>
</dbReference>
<dbReference type="SUPFAM" id="SSF54593">
    <property type="entry name" value="Glyoxalase/Bleomycin resistance protein/Dihydroxybiphenyl dioxygenase"/>
    <property type="match status" value="1"/>
</dbReference>
<dbReference type="PROSITE" id="PS51819">
    <property type="entry name" value="VOC"/>
    <property type="match status" value="2"/>
</dbReference>
<feature type="chain" id="PRO_0000088395" description="4-hydroxyphenylpyruvate dioxygenase">
    <location>
        <begin position="1"/>
        <end position="393"/>
    </location>
</feature>
<feature type="domain" description="VOC 1" evidence="2">
    <location>
        <begin position="17"/>
        <end position="148"/>
    </location>
</feature>
<feature type="domain" description="VOC 2" evidence="2">
    <location>
        <begin position="179"/>
        <end position="339"/>
    </location>
</feature>
<feature type="binding site" evidence="1">
    <location>
        <position position="182"/>
    </location>
    <ligand>
        <name>Fe cation</name>
        <dbReference type="ChEBI" id="CHEBI:24875"/>
    </ligand>
</feature>
<feature type="binding site" evidence="1">
    <location>
        <position position="267"/>
    </location>
    <ligand>
        <name>Fe cation</name>
        <dbReference type="ChEBI" id="CHEBI:24875"/>
    </ligand>
</feature>
<feature type="binding site" evidence="1">
    <location>
        <position position="350"/>
    </location>
    <ligand>
        <name>Fe cation</name>
        <dbReference type="ChEBI" id="CHEBI:24875"/>
    </ligand>
</feature>
<evidence type="ECO:0000250" key="1"/>
<evidence type="ECO:0000255" key="2">
    <source>
        <dbReference type="PROSITE-ProRule" id="PRU01163"/>
    </source>
</evidence>
<evidence type="ECO:0000269" key="3">
    <source>
    </source>
</evidence>
<evidence type="ECO:0000305" key="4"/>
<evidence type="ECO:0000305" key="5">
    <source>
    </source>
</evidence>
<evidence type="ECO:0000312" key="6">
    <source>
        <dbReference type="WormBase" id="T21C12.2"/>
    </source>
</evidence>
<keyword id="KW-0223">Dioxygenase</keyword>
<keyword id="KW-0408">Iron</keyword>
<keyword id="KW-0479">Metal-binding</keyword>
<keyword id="KW-0560">Oxidoreductase</keyword>
<keyword id="KW-0585">Phenylalanine catabolism</keyword>
<keyword id="KW-1185">Reference proteome</keyword>
<keyword id="KW-0677">Repeat</keyword>
<keyword id="KW-0828">Tyrosine catabolism</keyword>
<comment type="function">
    <text evidence="1 5">Key enzyme in the degradation of tyrosine.</text>
</comment>
<comment type="catalytic activity">
    <reaction>
        <text>3-(4-hydroxyphenyl)pyruvate + O2 = homogentisate + CO2</text>
        <dbReference type="Rhea" id="RHEA:16189"/>
        <dbReference type="ChEBI" id="CHEBI:15379"/>
        <dbReference type="ChEBI" id="CHEBI:16169"/>
        <dbReference type="ChEBI" id="CHEBI:16526"/>
        <dbReference type="ChEBI" id="CHEBI:36242"/>
        <dbReference type="EC" id="1.13.11.27"/>
    </reaction>
</comment>
<comment type="cofactor">
    <cofactor evidence="1">
        <name>Fe cation</name>
        <dbReference type="ChEBI" id="CHEBI:24875"/>
    </cofactor>
    <text evidence="1">Binds 1 Fe cation per subunit.</text>
</comment>
<comment type="pathway">
    <text>Amino-acid degradation; L-phenylalanine degradation; acetoacetate and fumarate from L-phenylalanine: step 3/6.</text>
</comment>
<comment type="tissue specificity">
    <text evidence="3">Expressed in the hypodermis and intestine.</text>
</comment>
<comment type="disruption phenotype">
    <text evidence="3">RNAi-mediated knockdown together with fah-1 RNAi rescues the impaired growth and fertility defects in the single fah-1 RNAi mutant.</text>
</comment>
<comment type="similarity">
    <text evidence="4">Belongs to the 4HPPD family.</text>
</comment>
<reference key="1">
    <citation type="journal article" date="1998" name="Science">
        <title>Genome sequence of the nematode C. elegans: a platform for investigating biology.</title>
        <authorList>
            <consortium name="The C. elegans sequencing consortium"/>
        </authorList>
    </citation>
    <scope>NUCLEOTIDE SEQUENCE [LARGE SCALE GENOMIC DNA]</scope>
    <source>
        <strain>Bristol N2</strain>
    </source>
</reference>
<reference key="2">
    <citation type="journal article" date="2008" name="J. Biol. Chem.">
        <title>The Caenorhabditis elegans K10C2.4 gene encodes a member of the fumarylacetoacetate hydrolase family: a Caenorhabditis elegans model of type I tyrosinemia.</title>
        <authorList>
            <person name="Fisher A.L."/>
            <person name="Page K.E."/>
            <person name="Lithgow G.J."/>
            <person name="Nash L."/>
        </authorList>
    </citation>
    <scope>FUNCTION</scope>
    <scope>TISSUE SPECIFICITY</scope>
    <scope>DISRUPTION PHENOTYPE</scope>
</reference>
<protein>
    <recommendedName>
        <fullName>4-hydroxyphenylpyruvate dioxygenase</fullName>
        <ecNumber>1.13.11.27</ecNumber>
    </recommendedName>
    <alternativeName>
        <fullName>4-hydroxyphenylpyruvic acid oxidase</fullName>
        <shortName>4HPPD</shortName>
        <shortName>HPD</shortName>
        <shortName>HPPDase</shortName>
    </alternativeName>
</protein>
<proteinExistence type="evidence at transcript level"/>
<gene>
    <name evidence="6" type="primary">hpd-1</name>
    <name evidence="6" type="ORF">T21C12.2</name>
</gene>
<name>HPPD_CAEEL</name>
<sequence length="393" mass="44383">MTTFDKGAKPDIGTFVAFDHVRFVVGNAKQAAYWYCANFGFEPFAYKGLETGSRITAQHAIRQDKIVFIFESALLPDNSELGNHLVQHGDGVKDVCFEVEDLDSIIAHAKAAGATIVHDITEESDADGSIRYATLRTYGETDHTLLERKNYRGAFLPGFKAHPMPATFFKTLPRVGLNFLDHCVGNQPDLQMDSAVQWYEKVLKFHRFWSVDDSMIHTEYSALRSIVVTNFEETIKMPINEPATSDKKAISQIQEYVDYYGGSGVQHIALNTSDIITAIEALRARGCEFLSIPSSYYDNLKERLAASSMVVKEDMDRLQKLHILVDFDENGYLLQIFSKPCQDRPTLFLEIIQRQNHEGFGAGNFKALFESIELEQTKRGNLFYDNVKDGNTK</sequence>
<accession>Q22633</accession>
<organism>
    <name type="scientific">Caenorhabditis elegans</name>
    <dbReference type="NCBI Taxonomy" id="6239"/>
    <lineage>
        <taxon>Eukaryota</taxon>
        <taxon>Metazoa</taxon>
        <taxon>Ecdysozoa</taxon>
        <taxon>Nematoda</taxon>
        <taxon>Chromadorea</taxon>
        <taxon>Rhabditida</taxon>
        <taxon>Rhabditina</taxon>
        <taxon>Rhabditomorpha</taxon>
        <taxon>Rhabditoidea</taxon>
        <taxon>Rhabditidae</taxon>
        <taxon>Peloderinae</taxon>
        <taxon>Caenorhabditis</taxon>
    </lineage>
</organism>